<name>CYB_NINTI</name>
<sequence>MTNLRKTHPLMKIINHSFIDLPAPSNISAWWNFGSLLGICLVIQILTGLFLAMHYTSDTLTAFSSVAHICRDVNYGWLIRNLHANGASMFFMCLFLHVGRGIYYGSYLYKETWNIGVILLLTVMATAFVGYVLPWGQMSFWGATVITNLLSAIPYIGTTLAEWIWGGFSVDKATLTRFFAFHFILPFIIMALVIVHLLFLHETGSNNPSGINPDSDKIPFHPYYTVKDALGFMFLLLTLLALALFSPDSLGDPDNFSPANPLNTPPHIKPEWYFLFAYAILRSIPNKLGGVLALLASILILLIIPFLHTANQRSMMFRPISQTLFWILAANLITLTWIGGQPVEHPFIIIGQLASMLYFLLILILMPLAGMFENYMLKPKL</sequence>
<comment type="function">
    <text evidence="2">Component of the ubiquinol-cytochrome c reductase complex (complex III or cytochrome b-c1 complex) that is part of the mitochondrial respiratory chain. The b-c1 complex mediates electron transfer from ubiquinol to cytochrome c. Contributes to the generation of a proton gradient across the mitochondrial membrane that is then used for ATP synthesis.</text>
</comment>
<comment type="cofactor">
    <cofactor evidence="2">
        <name>heme b</name>
        <dbReference type="ChEBI" id="CHEBI:60344"/>
    </cofactor>
    <text evidence="2">Binds 2 heme b groups non-covalently.</text>
</comment>
<comment type="subunit">
    <text evidence="2">The cytochrome bc1 complex contains 11 subunits: 3 respiratory subunits (MT-CYB, CYC1 and UQCRFS1), 2 core proteins (UQCRC1 and UQCRC2) and 6 low-molecular weight proteins (UQCRH/QCR6, UQCRB/QCR7, UQCRQ/QCR8, UQCR10/QCR9, UQCR11/QCR10 and a cleavage product of UQCRFS1). This cytochrome bc1 complex then forms a dimer.</text>
</comment>
<comment type="subcellular location">
    <subcellularLocation>
        <location evidence="2">Mitochondrion inner membrane</location>
        <topology evidence="2">Multi-pass membrane protein</topology>
    </subcellularLocation>
</comment>
<comment type="miscellaneous">
    <text evidence="1">Heme 1 (or BL or b562) is low-potential and absorbs at about 562 nm, and heme 2 (or BH or b566) is high-potential and absorbs at about 566 nm.</text>
</comment>
<comment type="similarity">
    <text evidence="3 4">Belongs to the cytochrome b family.</text>
</comment>
<comment type="caution">
    <text evidence="2">The full-length protein contains only eight transmembrane helices, not nine as predicted by bioinformatics tools.</text>
</comment>
<keyword id="KW-0249">Electron transport</keyword>
<keyword id="KW-0349">Heme</keyword>
<keyword id="KW-0408">Iron</keyword>
<keyword id="KW-0472">Membrane</keyword>
<keyword id="KW-0479">Metal-binding</keyword>
<keyword id="KW-0496">Mitochondrion</keyword>
<keyword id="KW-0999">Mitochondrion inner membrane</keyword>
<keyword id="KW-0679">Respiratory chain</keyword>
<keyword id="KW-0812">Transmembrane</keyword>
<keyword id="KW-1133">Transmembrane helix</keyword>
<keyword id="KW-0813">Transport</keyword>
<keyword id="KW-0830">Ubiquinone</keyword>
<organism>
    <name type="scientific">Ningaui timealeyi</name>
    <name type="common">Pilbara ningaui</name>
    <dbReference type="NCBI Taxonomy" id="60702"/>
    <lineage>
        <taxon>Eukaryota</taxon>
        <taxon>Metazoa</taxon>
        <taxon>Chordata</taxon>
        <taxon>Craniata</taxon>
        <taxon>Vertebrata</taxon>
        <taxon>Euteleostomi</taxon>
        <taxon>Mammalia</taxon>
        <taxon>Metatheria</taxon>
        <taxon>Dasyuromorphia</taxon>
        <taxon>Dasyuridae</taxon>
        <taxon>Ningaui</taxon>
    </lineage>
</organism>
<evidence type="ECO:0000250" key="1"/>
<evidence type="ECO:0000250" key="2">
    <source>
        <dbReference type="UniProtKB" id="P00157"/>
    </source>
</evidence>
<evidence type="ECO:0000255" key="3">
    <source>
        <dbReference type="PROSITE-ProRule" id="PRU00967"/>
    </source>
</evidence>
<evidence type="ECO:0000255" key="4">
    <source>
        <dbReference type="PROSITE-ProRule" id="PRU00968"/>
    </source>
</evidence>
<accession>O20435</accession>
<reference key="1">
    <citation type="journal article" date="1997" name="Mol. Phylogenet. Evol.">
        <title>A multigene assessment of phylogenetic relationships within the dasyurid marsupial subfamily Sminthopsinae.</title>
        <authorList>
            <person name="Krajewski C."/>
            <person name="Blacket M."/>
            <person name="Buckley L."/>
            <person name="Westerman M."/>
        </authorList>
    </citation>
    <scope>NUCLEOTIDE SEQUENCE [GENOMIC DNA]</scope>
</reference>
<geneLocation type="mitochondrion"/>
<feature type="chain" id="PRO_0000061276" description="Cytochrome b">
    <location>
        <begin position="1"/>
        <end position="381"/>
    </location>
</feature>
<feature type="transmembrane region" description="Helical" evidence="2">
    <location>
        <begin position="33"/>
        <end position="53"/>
    </location>
</feature>
<feature type="transmembrane region" description="Helical" evidence="2">
    <location>
        <begin position="77"/>
        <end position="98"/>
    </location>
</feature>
<feature type="transmembrane region" description="Helical" evidence="2">
    <location>
        <begin position="113"/>
        <end position="133"/>
    </location>
</feature>
<feature type="transmembrane region" description="Helical" evidence="2">
    <location>
        <begin position="178"/>
        <end position="198"/>
    </location>
</feature>
<feature type="transmembrane region" description="Helical" evidence="2">
    <location>
        <begin position="226"/>
        <end position="246"/>
    </location>
</feature>
<feature type="transmembrane region" description="Helical" evidence="2">
    <location>
        <begin position="288"/>
        <end position="308"/>
    </location>
</feature>
<feature type="transmembrane region" description="Helical" evidence="2">
    <location>
        <begin position="320"/>
        <end position="340"/>
    </location>
</feature>
<feature type="transmembrane region" description="Helical" evidence="2">
    <location>
        <begin position="347"/>
        <end position="367"/>
    </location>
</feature>
<feature type="binding site" description="axial binding residue" evidence="2">
    <location>
        <position position="83"/>
    </location>
    <ligand>
        <name>heme b</name>
        <dbReference type="ChEBI" id="CHEBI:60344"/>
        <label>b562</label>
    </ligand>
    <ligandPart>
        <name>Fe</name>
        <dbReference type="ChEBI" id="CHEBI:18248"/>
    </ligandPart>
</feature>
<feature type="binding site" description="axial binding residue" evidence="2">
    <location>
        <position position="97"/>
    </location>
    <ligand>
        <name>heme b</name>
        <dbReference type="ChEBI" id="CHEBI:60344"/>
        <label>b566</label>
    </ligand>
    <ligandPart>
        <name>Fe</name>
        <dbReference type="ChEBI" id="CHEBI:18248"/>
    </ligandPart>
</feature>
<feature type="binding site" description="axial binding residue" evidence="2">
    <location>
        <position position="182"/>
    </location>
    <ligand>
        <name>heme b</name>
        <dbReference type="ChEBI" id="CHEBI:60344"/>
        <label>b562</label>
    </ligand>
    <ligandPart>
        <name>Fe</name>
        <dbReference type="ChEBI" id="CHEBI:18248"/>
    </ligandPart>
</feature>
<feature type="binding site" description="axial binding residue" evidence="2">
    <location>
        <position position="196"/>
    </location>
    <ligand>
        <name>heme b</name>
        <dbReference type="ChEBI" id="CHEBI:60344"/>
        <label>b566</label>
    </ligand>
    <ligandPart>
        <name>Fe</name>
        <dbReference type="ChEBI" id="CHEBI:18248"/>
    </ligandPart>
</feature>
<feature type="binding site" evidence="2">
    <location>
        <position position="201"/>
    </location>
    <ligand>
        <name>a ubiquinone</name>
        <dbReference type="ChEBI" id="CHEBI:16389"/>
    </ligand>
</feature>
<protein>
    <recommendedName>
        <fullName>Cytochrome b</fullName>
    </recommendedName>
    <alternativeName>
        <fullName>Complex III subunit 3</fullName>
    </alternativeName>
    <alternativeName>
        <fullName>Complex III subunit III</fullName>
    </alternativeName>
    <alternativeName>
        <fullName>Cytochrome b-c1 complex subunit 3</fullName>
    </alternativeName>
    <alternativeName>
        <fullName>Ubiquinol-cytochrome-c reductase complex cytochrome b subunit</fullName>
    </alternativeName>
</protein>
<proteinExistence type="inferred from homology"/>
<dbReference type="EMBL" id="AF001584">
    <property type="protein sequence ID" value="AAB91374.1"/>
    <property type="molecule type" value="Genomic_DNA"/>
</dbReference>
<dbReference type="SMR" id="O20435"/>
<dbReference type="GO" id="GO:0005743">
    <property type="term" value="C:mitochondrial inner membrane"/>
    <property type="evidence" value="ECO:0007669"/>
    <property type="project" value="UniProtKB-SubCell"/>
</dbReference>
<dbReference type="GO" id="GO:0045275">
    <property type="term" value="C:respiratory chain complex III"/>
    <property type="evidence" value="ECO:0007669"/>
    <property type="project" value="InterPro"/>
</dbReference>
<dbReference type="GO" id="GO:0046872">
    <property type="term" value="F:metal ion binding"/>
    <property type="evidence" value="ECO:0007669"/>
    <property type="project" value="UniProtKB-KW"/>
</dbReference>
<dbReference type="GO" id="GO:0008121">
    <property type="term" value="F:ubiquinol-cytochrome-c reductase activity"/>
    <property type="evidence" value="ECO:0007669"/>
    <property type="project" value="InterPro"/>
</dbReference>
<dbReference type="GO" id="GO:0006122">
    <property type="term" value="P:mitochondrial electron transport, ubiquinol to cytochrome c"/>
    <property type="evidence" value="ECO:0007669"/>
    <property type="project" value="TreeGrafter"/>
</dbReference>
<dbReference type="CDD" id="cd00290">
    <property type="entry name" value="cytochrome_b_C"/>
    <property type="match status" value="1"/>
</dbReference>
<dbReference type="CDD" id="cd00284">
    <property type="entry name" value="Cytochrome_b_N"/>
    <property type="match status" value="1"/>
</dbReference>
<dbReference type="FunFam" id="1.20.810.10:FF:000002">
    <property type="entry name" value="Cytochrome b"/>
    <property type="match status" value="1"/>
</dbReference>
<dbReference type="Gene3D" id="1.20.810.10">
    <property type="entry name" value="Cytochrome Bc1 Complex, Chain C"/>
    <property type="match status" value="1"/>
</dbReference>
<dbReference type="InterPro" id="IPR005798">
    <property type="entry name" value="Cyt_b/b6_C"/>
</dbReference>
<dbReference type="InterPro" id="IPR036150">
    <property type="entry name" value="Cyt_b/b6_C_sf"/>
</dbReference>
<dbReference type="InterPro" id="IPR005797">
    <property type="entry name" value="Cyt_b/b6_N"/>
</dbReference>
<dbReference type="InterPro" id="IPR027387">
    <property type="entry name" value="Cytb/b6-like_sf"/>
</dbReference>
<dbReference type="InterPro" id="IPR030689">
    <property type="entry name" value="Cytochrome_b"/>
</dbReference>
<dbReference type="InterPro" id="IPR048260">
    <property type="entry name" value="Cytochrome_b_C_euk/bac"/>
</dbReference>
<dbReference type="InterPro" id="IPR048259">
    <property type="entry name" value="Cytochrome_b_N_euk/bac"/>
</dbReference>
<dbReference type="InterPro" id="IPR016174">
    <property type="entry name" value="Di-haem_cyt_TM"/>
</dbReference>
<dbReference type="PANTHER" id="PTHR19271">
    <property type="entry name" value="CYTOCHROME B"/>
    <property type="match status" value="1"/>
</dbReference>
<dbReference type="PANTHER" id="PTHR19271:SF16">
    <property type="entry name" value="CYTOCHROME B"/>
    <property type="match status" value="1"/>
</dbReference>
<dbReference type="Pfam" id="PF00032">
    <property type="entry name" value="Cytochrom_B_C"/>
    <property type="match status" value="1"/>
</dbReference>
<dbReference type="Pfam" id="PF00033">
    <property type="entry name" value="Cytochrome_B"/>
    <property type="match status" value="1"/>
</dbReference>
<dbReference type="PIRSF" id="PIRSF038885">
    <property type="entry name" value="COB"/>
    <property type="match status" value="1"/>
</dbReference>
<dbReference type="SUPFAM" id="SSF81648">
    <property type="entry name" value="a domain/subunit of cytochrome bc1 complex (Ubiquinol-cytochrome c reductase)"/>
    <property type="match status" value="1"/>
</dbReference>
<dbReference type="SUPFAM" id="SSF81342">
    <property type="entry name" value="Transmembrane di-heme cytochromes"/>
    <property type="match status" value="1"/>
</dbReference>
<dbReference type="PROSITE" id="PS51003">
    <property type="entry name" value="CYTB_CTER"/>
    <property type="match status" value="1"/>
</dbReference>
<dbReference type="PROSITE" id="PS51002">
    <property type="entry name" value="CYTB_NTER"/>
    <property type="match status" value="1"/>
</dbReference>
<gene>
    <name type="primary">MT-CYB</name>
    <name type="synonym">COB</name>
    <name type="synonym">CYTB</name>
    <name type="synonym">MTCYB</name>
</gene>